<comment type="function">
    <text evidence="1">With S4 and S12 plays an important role in translational accuracy.</text>
</comment>
<comment type="function">
    <text evidence="1">Located at the back of the 30S subunit body where it stabilizes the conformation of the head with respect to the body.</text>
</comment>
<comment type="subunit">
    <text evidence="1">Part of the 30S ribosomal subunit. Contacts proteins S4 and S8.</text>
</comment>
<comment type="domain">
    <text>The N-terminal domain interacts with the head of the 30S subunit; the C-terminal domain interacts with the body and contacts protein S4. The interaction surface between S4 and S5 is involved in control of translational fidelity.</text>
</comment>
<comment type="similarity">
    <text evidence="1">Belongs to the universal ribosomal protein uS5 family.</text>
</comment>
<proteinExistence type="inferred from homology"/>
<reference key="1">
    <citation type="journal article" date="2003" name="Nature">
        <title>Genome divergence in two Prochlorococcus ecotypes reflects oceanic niche differentiation.</title>
        <authorList>
            <person name="Rocap G."/>
            <person name="Larimer F.W."/>
            <person name="Lamerdin J.E."/>
            <person name="Malfatti S."/>
            <person name="Chain P."/>
            <person name="Ahlgren N.A."/>
            <person name="Arellano A."/>
            <person name="Coleman M."/>
            <person name="Hauser L."/>
            <person name="Hess W.R."/>
            <person name="Johnson Z.I."/>
            <person name="Land M.L."/>
            <person name="Lindell D."/>
            <person name="Post A.F."/>
            <person name="Regala W."/>
            <person name="Shah M."/>
            <person name="Shaw S.L."/>
            <person name="Steglich C."/>
            <person name="Sullivan M.B."/>
            <person name="Ting C.S."/>
            <person name="Tolonen A."/>
            <person name="Webb E.A."/>
            <person name="Zinser E.R."/>
            <person name="Chisholm S.W."/>
        </authorList>
    </citation>
    <scope>NUCLEOTIDE SEQUENCE [LARGE SCALE GENOMIC DNA]</scope>
    <source>
        <strain>CCMP1986 / NIES-2087 / MED4</strain>
    </source>
</reference>
<dbReference type="EMBL" id="BX548174">
    <property type="protein sequence ID" value="CAE20001.1"/>
    <property type="molecule type" value="Genomic_DNA"/>
</dbReference>
<dbReference type="RefSeq" id="WP_011133170.1">
    <property type="nucleotide sequence ID" value="NC_005072.1"/>
</dbReference>
<dbReference type="SMR" id="Q7UZW0"/>
<dbReference type="STRING" id="59919.PMM1542"/>
<dbReference type="KEGG" id="pmm:PMM1542"/>
<dbReference type="eggNOG" id="COG0098">
    <property type="taxonomic scope" value="Bacteria"/>
</dbReference>
<dbReference type="HOGENOM" id="CLU_065898_2_1_3"/>
<dbReference type="OrthoDB" id="9809045at2"/>
<dbReference type="Proteomes" id="UP000001026">
    <property type="component" value="Chromosome"/>
</dbReference>
<dbReference type="GO" id="GO:0015935">
    <property type="term" value="C:small ribosomal subunit"/>
    <property type="evidence" value="ECO:0007669"/>
    <property type="project" value="InterPro"/>
</dbReference>
<dbReference type="GO" id="GO:0019843">
    <property type="term" value="F:rRNA binding"/>
    <property type="evidence" value="ECO:0007669"/>
    <property type="project" value="UniProtKB-UniRule"/>
</dbReference>
<dbReference type="GO" id="GO:0003735">
    <property type="term" value="F:structural constituent of ribosome"/>
    <property type="evidence" value="ECO:0007669"/>
    <property type="project" value="InterPro"/>
</dbReference>
<dbReference type="GO" id="GO:0006412">
    <property type="term" value="P:translation"/>
    <property type="evidence" value="ECO:0007669"/>
    <property type="project" value="UniProtKB-UniRule"/>
</dbReference>
<dbReference type="FunFam" id="3.30.160.20:FF:000001">
    <property type="entry name" value="30S ribosomal protein S5"/>
    <property type="match status" value="1"/>
</dbReference>
<dbReference type="FunFam" id="3.30.230.10:FF:000002">
    <property type="entry name" value="30S ribosomal protein S5"/>
    <property type="match status" value="1"/>
</dbReference>
<dbReference type="Gene3D" id="3.30.160.20">
    <property type="match status" value="1"/>
</dbReference>
<dbReference type="Gene3D" id="3.30.230.10">
    <property type="match status" value="1"/>
</dbReference>
<dbReference type="HAMAP" id="MF_01307_B">
    <property type="entry name" value="Ribosomal_uS5_B"/>
    <property type="match status" value="1"/>
</dbReference>
<dbReference type="InterPro" id="IPR020568">
    <property type="entry name" value="Ribosomal_Su5_D2-typ_SF"/>
</dbReference>
<dbReference type="InterPro" id="IPR000851">
    <property type="entry name" value="Ribosomal_uS5"/>
</dbReference>
<dbReference type="InterPro" id="IPR005712">
    <property type="entry name" value="Ribosomal_uS5_bac-type"/>
</dbReference>
<dbReference type="InterPro" id="IPR005324">
    <property type="entry name" value="Ribosomal_uS5_C"/>
</dbReference>
<dbReference type="InterPro" id="IPR013810">
    <property type="entry name" value="Ribosomal_uS5_N"/>
</dbReference>
<dbReference type="InterPro" id="IPR018192">
    <property type="entry name" value="Ribosomal_uS5_N_CS"/>
</dbReference>
<dbReference type="InterPro" id="IPR014721">
    <property type="entry name" value="Ribsml_uS5_D2-typ_fold_subgr"/>
</dbReference>
<dbReference type="NCBIfam" id="TIGR01021">
    <property type="entry name" value="rpsE_bact"/>
    <property type="match status" value="1"/>
</dbReference>
<dbReference type="PANTHER" id="PTHR48277">
    <property type="entry name" value="MITOCHONDRIAL RIBOSOMAL PROTEIN S5"/>
    <property type="match status" value="1"/>
</dbReference>
<dbReference type="PANTHER" id="PTHR48277:SF1">
    <property type="entry name" value="MITOCHONDRIAL RIBOSOMAL PROTEIN S5"/>
    <property type="match status" value="1"/>
</dbReference>
<dbReference type="Pfam" id="PF00333">
    <property type="entry name" value="Ribosomal_S5"/>
    <property type="match status" value="1"/>
</dbReference>
<dbReference type="Pfam" id="PF03719">
    <property type="entry name" value="Ribosomal_S5_C"/>
    <property type="match status" value="1"/>
</dbReference>
<dbReference type="SUPFAM" id="SSF54768">
    <property type="entry name" value="dsRNA-binding domain-like"/>
    <property type="match status" value="1"/>
</dbReference>
<dbReference type="SUPFAM" id="SSF54211">
    <property type="entry name" value="Ribosomal protein S5 domain 2-like"/>
    <property type="match status" value="1"/>
</dbReference>
<dbReference type="PROSITE" id="PS00585">
    <property type="entry name" value="RIBOSOMAL_S5"/>
    <property type="match status" value="1"/>
</dbReference>
<dbReference type="PROSITE" id="PS50881">
    <property type="entry name" value="S5_DSRBD"/>
    <property type="match status" value="1"/>
</dbReference>
<feature type="chain" id="PRO_0000131573" description="Small ribosomal subunit protein uS5">
    <location>
        <begin position="1"/>
        <end position="206"/>
    </location>
</feature>
<feature type="domain" description="S5 DRBM" evidence="1">
    <location>
        <begin position="50"/>
        <end position="113"/>
    </location>
</feature>
<feature type="region of interest" description="Disordered" evidence="2">
    <location>
        <begin position="1"/>
        <end position="52"/>
    </location>
</feature>
<feature type="compositionally biased region" description="Polar residues" evidence="2">
    <location>
        <begin position="1"/>
        <end position="23"/>
    </location>
</feature>
<feature type="compositionally biased region" description="Basic and acidic residues" evidence="2">
    <location>
        <begin position="24"/>
        <end position="52"/>
    </location>
</feature>
<evidence type="ECO:0000255" key="1">
    <source>
        <dbReference type="HAMAP-Rule" id="MF_01307"/>
    </source>
</evidence>
<evidence type="ECO:0000256" key="2">
    <source>
        <dbReference type="SAM" id="MobiDB-lite"/>
    </source>
</evidence>
<evidence type="ECO:0000305" key="3"/>
<keyword id="KW-0687">Ribonucleoprotein</keyword>
<keyword id="KW-0689">Ribosomal protein</keyword>
<keyword id="KW-0694">RNA-binding</keyword>
<keyword id="KW-0699">rRNA-binding</keyword>
<protein>
    <recommendedName>
        <fullName evidence="1">Small ribosomal subunit protein uS5</fullName>
    </recommendedName>
    <alternativeName>
        <fullName evidence="3">30S ribosomal protein S5</fullName>
    </alternativeName>
</protein>
<name>RS5_PROMP</name>
<organism>
    <name type="scientific">Prochlorococcus marinus subsp. pastoris (strain CCMP1986 / NIES-2087 / MED4)</name>
    <dbReference type="NCBI Taxonomy" id="59919"/>
    <lineage>
        <taxon>Bacteria</taxon>
        <taxon>Bacillati</taxon>
        <taxon>Cyanobacteriota</taxon>
        <taxon>Cyanophyceae</taxon>
        <taxon>Synechococcales</taxon>
        <taxon>Prochlorococcaceae</taxon>
        <taxon>Prochlorococcus</taxon>
    </lineage>
</organism>
<gene>
    <name evidence="1" type="primary">rpsE</name>
    <name evidence="1" type="synonym">rps5</name>
    <name type="ordered locus">PMM1542</name>
</gene>
<accession>Q7UZW0</accession>
<sequence length="206" mass="22204">MTDTPTKQENQSKTENPPSSNANEQRRGNRNNDRKRNRRGDSKNERDSEWQERVVQIRRVSKTVKGGKKMSFRAIVVVGNEKGQVGVGVGKAGDVIGAVRKGVSDGKKHLVRVPLTPNNSIPTLSKGRDGAANVLIRPAAPGTGVIAGGSIRTVLELAGIKNVLAKRLGSKTPLNNARAAMVALSQLRTHKSASRERGISLEQLYS</sequence>